<protein>
    <recommendedName>
        <fullName evidence="11">Putative cell agglutination protein pfl8</fullName>
    </recommendedName>
    <alternativeName>
        <fullName evidence="9">Adhesin pfl8</fullName>
    </alternativeName>
    <alternativeName>
        <fullName evidence="10">Pombe flocculin 8</fullName>
    </alternativeName>
    <alternativeName>
        <fullName evidence="8">Sim4-mal2-associated protein 5</fullName>
    </alternativeName>
</protein>
<dbReference type="EMBL" id="CU329670">
    <property type="protein sequence ID" value="CAB03600.1"/>
    <property type="molecule type" value="Genomic_DNA"/>
</dbReference>
<dbReference type="PIR" id="T38113">
    <property type="entry name" value="T38113"/>
</dbReference>
<dbReference type="RefSeq" id="NP_592795.1">
    <property type="nucleotide sequence ID" value="NM_001018195.2"/>
</dbReference>
<dbReference type="BioGRID" id="278345">
    <property type="interactions" value="7"/>
</dbReference>
<dbReference type="STRING" id="284812.Q92344"/>
<dbReference type="GlyCosmos" id="Q92344">
    <property type="glycosylation" value="3 sites, No reported glycans"/>
</dbReference>
<dbReference type="PaxDb" id="4896-SPAC1F8.06.1"/>
<dbReference type="EnsemblFungi" id="SPAC1F8.06.1">
    <property type="protein sequence ID" value="SPAC1F8.06.1:pep"/>
    <property type="gene ID" value="SPAC1F8.06"/>
</dbReference>
<dbReference type="GeneID" id="2541854"/>
<dbReference type="KEGG" id="spo:2541854"/>
<dbReference type="PomBase" id="SPAC1F8.06">
    <property type="gene designation" value="pfl8"/>
</dbReference>
<dbReference type="VEuPathDB" id="FungiDB:SPAC1F8.06"/>
<dbReference type="eggNOG" id="ENOG502SWCY">
    <property type="taxonomic scope" value="Eukaryota"/>
</dbReference>
<dbReference type="HOGENOM" id="CLU_717978_0_0_1"/>
<dbReference type="InParanoid" id="Q92344"/>
<dbReference type="PhylomeDB" id="Q92344"/>
<dbReference type="PRO" id="PR:Q92344"/>
<dbReference type="Proteomes" id="UP000002485">
    <property type="component" value="Chromosome I"/>
</dbReference>
<dbReference type="GO" id="GO:0010339">
    <property type="term" value="C:external side of cell wall"/>
    <property type="evidence" value="ECO:0000304"/>
    <property type="project" value="PomBase"/>
</dbReference>
<dbReference type="GO" id="GO:0005576">
    <property type="term" value="C:extracellular region"/>
    <property type="evidence" value="ECO:0007669"/>
    <property type="project" value="UniProtKB-SubCell"/>
</dbReference>
<dbReference type="GO" id="GO:0000128">
    <property type="term" value="P:flocculation"/>
    <property type="evidence" value="ECO:0000315"/>
    <property type="project" value="PomBase"/>
</dbReference>
<dbReference type="FunFam" id="2.60.120.1560:FF:000006">
    <property type="entry name" value="Putative cell agglutination protein SPAC1348.08c"/>
    <property type="match status" value="1"/>
</dbReference>
<dbReference type="Gene3D" id="2.60.120.1560">
    <property type="match status" value="1"/>
</dbReference>
<dbReference type="InterPro" id="IPR018871">
    <property type="entry name" value="GLEYA_adhesin_domain"/>
</dbReference>
<dbReference type="InterPro" id="IPR037524">
    <property type="entry name" value="PA14/GLEYA"/>
</dbReference>
<dbReference type="InterPro" id="IPR051905">
    <property type="entry name" value="S_pombe_Mam3/Map4"/>
</dbReference>
<dbReference type="PANTHER" id="PTHR31492">
    <property type="entry name" value="M CELL-TYPE AGGLUTINATION PROTEIN MAM3-RELATED"/>
    <property type="match status" value="1"/>
</dbReference>
<dbReference type="PANTHER" id="PTHR31492:SF14">
    <property type="entry name" value="M CELL-TYPE AGGLUTINATION PROTEIN MAM3-RELATED"/>
    <property type="match status" value="1"/>
</dbReference>
<dbReference type="Pfam" id="PF10528">
    <property type="entry name" value="GLEYA"/>
    <property type="match status" value="1"/>
</dbReference>
<dbReference type="PROSITE" id="PS51820">
    <property type="entry name" value="PA14"/>
    <property type="match status" value="1"/>
</dbReference>
<gene>
    <name evidence="10" type="primary">pfl8</name>
    <name evidence="8" type="synonym">fta5</name>
    <name type="synonym">sma5</name>
    <name evidence="15" type="ORF">SPAC1F8.06</name>
</gene>
<evidence type="ECO:0000250" key="1">
    <source>
        <dbReference type="UniProtKB" id="O74346"/>
    </source>
</evidence>
<evidence type="ECO:0000255" key="2"/>
<evidence type="ECO:0000255" key="3">
    <source>
        <dbReference type="PROSITE-ProRule" id="PRU00498"/>
    </source>
</evidence>
<evidence type="ECO:0000255" key="4">
    <source>
        <dbReference type="PROSITE-ProRule" id="PRU01164"/>
    </source>
</evidence>
<evidence type="ECO:0000256" key="5">
    <source>
        <dbReference type="SAM" id="MobiDB-lite"/>
    </source>
</evidence>
<evidence type="ECO:0000269" key="6">
    <source>
    </source>
</evidence>
<evidence type="ECO:0000269" key="7">
    <source>
    </source>
</evidence>
<evidence type="ECO:0000303" key="8">
    <source>
    </source>
</evidence>
<evidence type="ECO:0000303" key="9">
    <source>
    </source>
</evidence>
<evidence type="ECO:0000303" key="10">
    <source>
    </source>
</evidence>
<evidence type="ECO:0000305" key="11"/>
<evidence type="ECO:0000305" key="12">
    <source>
    </source>
</evidence>
<evidence type="ECO:0000305" key="13">
    <source>
    </source>
</evidence>
<evidence type="ECO:0000305" key="14">
    <source>
    </source>
</evidence>
<evidence type="ECO:0000312" key="15">
    <source>
        <dbReference type="PomBase" id="SPAC1F8.06"/>
    </source>
</evidence>
<comment type="function">
    <text evidence="1 7">May be involved in agglutination during conjugation or other aspects of colony formation (By similarity). Induces flocculation when overexpressed (PubMed:23236291).</text>
</comment>
<comment type="subcellular location">
    <subcellularLocation>
        <location evidence="6">Secreted</location>
    </subcellularLocation>
    <subcellularLocation>
        <location evidence="14">Cell surface</location>
    </subcellularLocation>
</comment>
<comment type="caution">
    <text evidence="12 13">Was originally thought to be a kinetochore protein, but co-localization has not been confirmed (PubMed:16079914). A more recent study identified it as a secreted protein (PubMed:16823372).</text>
</comment>
<proteinExistence type="evidence at protein level"/>
<sequence>MNSYISLIFTLLFFTSAARSSSVSVETGSCVRYTTIYSSGSSEFTSTITPETPSSSSSTFVPISTHTSSATNTTSGQLSISSSSSTSSEYSSSSIPITTVSSSDSFIPSSSQTISASSSTTDNVIVSSSISSTVSSTPVSTIYSGTSGTTFVSSSTTYQVIPTQICDGVRGLEYAVYNYDLPSESTFCHPSNGYTEVSTFNKPAYFGSKDLKQSAPLFTGIFSSLDDIPTYSASDYLPAYPPNPEGMSSTSSSCKTIVYQFFFRVPATDNWSLFVKNVDDAFFGWFGDKAISGWSNVNYDAYAHWRIGAYGMGTFDLGYLEQDSFVPVRFVLANGAYIGGFDFAFNSSSTGPVRTTSYSYTSTCDKSFLPFGKGNGGLDEGTANV</sequence>
<name>PFL8_SCHPO</name>
<feature type="signal peptide" evidence="2">
    <location>
        <begin position="1"/>
        <end position="20"/>
    </location>
</feature>
<feature type="chain" id="PRO_0000116633" description="Putative cell agglutination protein pfl8" evidence="2">
    <location>
        <begin position="21"/>
        <end position="385"/>
    </location>
</feature>
<feature type="domain" description="PA14" evidence="4">
    <location>
        <begin position="196"/>
        <end position="360"/>
    </location>
</feature>
<feature type="region of interest" description="Disordered" evidence="5">
    <location>
        <begin position="41"/>
        <end position="90"/>
    </location>
</feature>
<feature type="glycosylation site" description="N-linked (GlcNAc...) asparagine" evidence="3">
    <location>
        <position position="72"/>
    </location>
</feature>
<feature type="glycosylation site" description="N-linked (GlcNAc...) asparagine" evidence="3">
    <location>
        <position position="270"/>
    </location>
</feature>
<feature type="glycosylation site" description="N-linked (GlcNAc...) asparagine" evidence="3">
    <location>
        <position position="346"/>
    </location>
</feature>
<accession>Q92344</accession>
<keyword id="KW-0325">Glycoprotein</keyword>
<keyword id="KW-1185">Reference proteome</keyword>
<keyword id="KW-0964">Secreted</keyword>
<keyword id="KW-0732">Signal</keyword>
<reference key="1">
    <citation type="journal article" date="2002" name="Nature">
        <title>The genome sequence of Schizosaccharomyces pombe.</title>
        <authorList>
            <person name="Wood V."/>
            <person name="Gwilliam R."/>
            <person name="Rajandream M.A."/>
            <person name="Lyne M.H."/>
            <person name="Lyne R."/>
            <person name="Stewart A."/>
            <person name="Sgouros J.G."/>
            <person name="Peat N."/>
            <person name="Hayles J."/>
            <person name="Baker S.G."/>
            <person name="Basham D."/>
            <person name="Bowman S."/>
            <person name="Brooks K."/>
            <person name="Brown D."/>
            <person name="Brown S."/>
            <person name="Chillingworth T."/>
            <person name="Churcher C.M."/>
            <person name="Collins M."/>
            <person name="Connor R."/>
            <person name="Cronin A."/>
            <person name="Davis P."/>
            <person name="Feltwell T."/>
            <person name="Fraser A."/>
            <person name="Gentles S."/>
            <person name="Goble A."/>
            <person name="Hamlin N."/>
            <person name="Harris D.E."/>
            <person name="Hidalgo J."/>
            <person name="Hodgson G."/>
            <person name="Holroyd S."/>
            <person name="Hornsby T."/>
            <person name="Howarth S."/>
            <person name="Huckle E.J."/>
            <person name="Hunt S."/>
            <person name="Jagels K."/>
            <person name="James K.D."/>
            <person name="Jones L."/>
            <person name="Jones M."/>
            <person name="Leather S."/>
            <person name="McDonald S."/>
            <person name="McLean J."/>
            <person name="Mooney P."/>
            <person name="Moule S."/>
            <person name="Mungall K.L."/>
            <person name="Murphy L.D."/>
            <person name="Niblett D."/>
            <person name="Odell C."/>
            <person name="Oliver K."/>
            <person name="O'Neil S."/>
            <person name="Pearson D."/>
            <person name="Quail M.A."/>
            <person name="Rabbinowitsch E."/>
            <person name="Rutherford K.M."/>
            <person name="Rutter S."/>
            <person name="Saunders D."/>
            <person name="Seeger K."/>
            <person name="Sharp S."/>
            <person name="Skelton J."/>
            <person name="Simmonds M.N."/>
            <person name="Squares R."/>
            <person name="Squares S."/>
            <person name="Stevens K."/>
            <person name="Taylor K."/>
            <person name="Taylor R.G."/>
            <person name="Tivey A."/>
            <person name="Walsh S.V."/>
            <person name="Warren T."/>
            <person name="Whitehead S."/>
            <person name="Woodward J.R."/>
            <person name="Volckaert G."/>
            <person name="Aert R."/>
            <person name="Robben J."/>
            <person name="Grymonprez B."/>
            <person name="Weltjens I."/>
            <person name="Vanstreels E."/>
            <person name="Rieger M."/>
            <person name="Schaefer M."/>
            <person name="Mueller-Auer S."/>
            <person name="Gabel C."/>
            <person name="Fuchs M."/>
            <person name="Duesterhoeft A."/>
            <person name="Fritzc C."/>
            <person name="Holzer E."/>
            <person name="Moestl D."/>
            <person name="Hilbert H."/>
            <person name="Borzym K."/>
            <person name="Langer I."/>
            <person name="Beck A."/>
            <person name="Lehrach H."/>
            <person name="Reinhardt R."/>
            <person name="Pohl T.M."/>
            <person name="Eger P."/>
            <person name="Zimmermann W."/>
            <person name="Wedler H."/>
            <person name="Wambutt R."/>
            <person name="Purnelle B."/>
            <person name="Goffeau A."/>
            <person name="Cadieu E."/>
            <person name="Dreano S."/>
            <person name="Gloux S."/>
            <person name="Lelaure V."/>
            <person name="Mottier S."/>
            <person name="Galibert F."/>
            <person name="Aves S.J."/>
            <person name="Xiang Z."/>
            <person name="Hunt C."/>
            <person name="Moore K."/>
            <person name="Hurst S.M."/>
            <person name="Lucas M."/>
            <person name="Rochet M."/>
            <person name="Gaillardin C."/>
            <person name="Tallada V.A."/>
            <person name="Garzon A."/>
            <person name="Thode G."/>
            <person name="Daga R.R."/>
            <person name="Cruzado L."/>
            <person name="Jimenez J."/>
            <person name="Sanchez M."/>
            <person name="del Rey F."/>
            <person name="Benito J."/>
            <person name="Dominguez A."/>
            <person name="Revuelta J.L."/>
            <person name="Moreno S."/>
            <person name="Armstrong J."/>
            <person name="Forsburg S.L."/>
            <person name="Cerutti L."/>
            <person name="Lowe T."/>
            <person name="McCombie W.R."/>
            <person name="Paulsen I."/>
            <person name="Potashkin J."/>
            <person name="Shpakovski G.V."/>
            <person name="Ussery D."/>
            <person name="Barrell B.G."/>
            <person name="Nurse P."/>
        </authorList>
    </citation>
    <scope>NUCLEOTIDE SEQUENCE [LARGE SCALE GENOMIC DNA]</scope>
    <source>
        <strain>972 / ATCC 24843</strain>
    </source>
</reference>
<reference key="2">
    <citation type="journal article" date="2005" name="EMBO J.">
        <title>Molecular analysis of kinetochore architecture in fission yeast.</title>
        <authorList>
            <person name="Liu X."/>
            <person name="McLeod I."/>
            <person name="Anderson S."/>
            <person name="Yates J.R. III"/>
            <person name="He X."/>
        </authorList>
    </citation>
    <scope>IDENTIFICATION BY MASS SPECTROMETRY</scope>
</reference>
<reference key="3">
    <citation type="journal article" date="2006" name="Nat. Biotechnol.">
        <title>ORFeome cloning and global analysis of protein localization in the fission yeast Schizosaccharomyces pombe.</title>
        <authorList>
            <person name="Matsuyama A."/>
            <person name="Arai R."/>
            <person name="Yashiroda Y."/>
            <person name="Shirai A."/>
            <person name="Kamata A."/>
            <person name="Sekido S."/>
            <person name="Kobayashi Y."/>
            <person name="Hashimoto A."/>
            <person name="Hamamoto M."/>
            <person name="Hiraoka Y."/>
            <person name="Horinouchi S."/>
            <person name="Yoshida M."/>
        </authorList>
    </citation>
    <scope>SUBCELLULAR LOCATION [LARGE SCALE ANALYSIS]</scope>
</reference>
<reference key="4">
    <citation type="journal article" date="2008" name="Fungal Genet. Biol.">
        <title>Molecular phylogenetics of ascomycotal adhesins--a novel family of putative cell-surface adhesive proteins in fission yeasts.</title>
        <authorList>
            <person name="Linder T."/>
            <person name="Gustafsson C.M."/>
        </authorList>
    </citation>
    <scope>DOMAIN</scope>
</reference>
<reference key="5">
    <citation type="journal article" date="2012" name="PLoS Genet.">
        <title>Deciphering the transcriptional-regulatory network of flocculation in Schizosaccharomyces pombe.</title>
        <authorList>
            <person name="Kwon E.J."/>
            <person name="Laderoute A."/>
            <person name="Chatfield-Reed K."/>
            <person name="Vachon L."/>
            <person name="Karagiannis J."/>
            <person name="Chua G."/>
        </authorList>
    </citation>
    <scope>FUNCTION</scope>
</reference>
<organism>
    <name type="scientific">Schizosaccharomyces pombe (strain 972 / ATCC 24843)</name>
    <name type="common">Fission yeast</name>
    <dbReference type="NCBI Taxonomy" id="284812"/>
    <lineage>
        <taxon>Eukaryota</taxon>
        <taxon>Fungi</taxon>
        <taxon>Dikarya</taxon>
        <taxon>Ascomycota</taxon>
        <taxon>Taphrinomycotina</taxon>
        <taxon>Schizosaccharomycetes</taxon>
        <taxon>Schizosaccharomycetales</taxon>
        <taxon>Schizosaccharomycetaceae</taxon>
        <taxon>Schizosaccharomyces</taxon>
    </lineage>
</organism>